<evidence type="ECO:0000255" key="1">
    <source>
        <dbReference type="PROSITE-ProRule" id="PRU00834"/>
    </source>
</evidence>
<evidence type="ECO:0000269" key="2">
    <source>
    </source>
</evidence>
<evidence type="ECO:0000269" key="3">
    <source>
    </source>
</evidence>
<evidence type="ECO:0000269" key="4">
    <source>
    </source>
</evidence>
<evidence type="ECO:0000269" key="5">
    <source>
    </source>
</evidence>
<evidence type="ECO:0000269" key="6">
    <source>
    </source>
</evidence>
<evidence type="ECO:0000269" key="7">
    <source>
    </source>
</evidence>
<evidence type="ECO:0000269" key="8">
    <source>
    </source>
</evidence>
<evidence type="ECO:0000269" key="9">
    <source>
    </source>
</evidence>
<evidence type="ECO:0000305" key="10"/>
<evidence type="ECO:0007829" key="11">
    <source>
        <dbReference type="PDB" id="2E2Z"/>
    </source>
</evidence>
<sequence length="174" mass="19855">MIPRTRTLLQSKIPITRYFARCWAPRVRYNVCRTLPAAALHTNIIAHNEVKKDDKKVHLGSFKVDKPKMMIAFTCKKCNTRSSHTMSKQAYEKGTVLISCPHCKVRHLIADHLKIFHDHHVTVEQLMKANGEQVSQDVGDLEFEDIPDSLKDVLGKYAKNNSENASQLPHPSQK</sequence>
<keyword id="KW-0002">3D-structure</keyword>
<keyword id="KW-0143">Chaperone</keyword>
<keyword id="KW-0903">Direct protein sequencing</keyword>
<keyword id="KW-0472">Membrane</keyword>
<keyword id="KW-0479">Metal-binding</keyword>
<keyword id="KW-0496">Mitochondrion</keyword>
<keyword id="KW-0999">Mitochondrion inner membrane</keyword>
<keyword id="KW-0653">Protein transport</keyword>
<keyword id="KW-1185">Reference proteome</keyword>
<keyword id="KW-0809">Transit peptide</keyword>
<keyword id="KW-0813">Transport</keyword>
<keyword id="KW-0862">Zinc</keyword>
<keyword id="KW-0863">Zinc-finger</keyword>
<comment type="function">
    <text evidence="5 6 7 8">Involved in protein import into mitochondria. Acts as a Hsp70-specific chaperone that prevents self-aggregation of the matrix Hsp70 chaperones SSC1 (mtHSP70) and SSQ1, thereby maintaining their function in mitochondrial protein import and Fe/S protein biosynthesis. May act together with PAM18 as co-chaperone to facilitate recognition and folding of imported proteins by SSC1 in the mitochondrial matrix.</text>
</comment>
<comment type="cofactor">
    <cofactor>
        <name>Zn(2+)</name>
        <dbReference type="ChEBI" id="CHEBI:29105"/>
    </cofactor>
    <text>Binds 1 zinc ion per subunit.</text>
</comment>
<comment type="subunit">
    <text evidence="6 7 9">Interacts with SSC1; binds to the nucleotide-free state as well as to the ADP- or ATP-bound state of SSC1.</text>
</comment>
<comment type="interaction">
    <interactant intactId="EBI-28366">
        <id>P42844</id>
    </interactant>
    <interactant intactId="EBI-7276682">
        <id>P0CS91</id>
        <label>SSC1</label>
    </interactant>
    <organismsDiffer>true</organismsDiffer>
    <experiments>2</experiments>
</comment>
<comment type="subcellular location">
    <subcellularLocation>
        <location evidence="2 4 5 6 7 8">Mitochondrion inner membrane</location>
        <topology evidence="2 4 5 6 7 8">Peripheral membrane protein</topology>
        <orientation evidence="2 4 5 6 7 8">Matrix side</orientation>
    </subcellularLocation>
    <text>Soluble matrix protein loosely associated with the inner membrane.</text>
</comment>
<comment type="induction">
    <text evidence="8">By heat shock (at protein level).</text>
</comment>
<comment type="miscellaneous">
    <text evidence="3">Present with 1520 molecules/cell in log phase SD medium.</text>
</comment>
<comment type="sequence caution" evidence="10">
    <conflict type="erroneous initiation">
        <sequence resource="EMBL-CDS" id="AAS56692"/>
    </conflict>
</comment>
<comment type="sequence caution" evidence="10">
    <conflict type="erroneous initiation">
        <sequence resource="EMBL-CDS" id="CAA86385"/>
    </conflict>
</comment>
<comment type="sequence caution" evidence="10">
    <conflict type="erroneous initiation">
        <sequence resource="EMBL-CDS" id="CAA96239"/>
    </conflict>
</comment>
<feature type="transit peptide" description="Mitochondrion" evidence="7">
    <location>
        <begin position="1"/>
        <end position="47"/>
    </location>
</feature>
<feature type="chain" id="PRO_0000203367" description="Mitochondrial protein import protein ZIM17">
    <location>
        <begin position="48"/>
        <end position="174"/>
    </location>
</feature>
<feature type="zinc finger region" description="DNL-type" evidence="1">
    <location>
        <begin position="64"/>
        <end position="159"/>
    </location>
</feature>
<feature type="binding site" evidence="1">
    <location>
        <position position="75"/>
    </location>
    <ligand>
        <name>Zn(2+)</name>
        <dbReference type="ChEBI" id="CHEBI:29105"/>
    </ligand>
</feature>
<feature type="binding site" evidence="1">
    <location>
        <position position="78"/>
    </location>
    <ligand>
        <name>Zn(2+)</name>
        <dbReference type="ChEBI" id="CHEBI:29105"/>
    </ligand>
</feature>
<feature type="binding site" evidence="1">
    <location>
        <position position="100"/>
    </location>
    <ligand>
        <name>Zn(2+)</name>
        <dbReference type="ChEBI" id="CHEBI:29105"/>
    </ligand>
</feature>
<feature type="binding site" evidence="1">
    <location>
        <position position="103"/>
    </location>
    <ligand>
        <name>Zn(2+)</name>
        <dbReference type="ChEBI" id="CHEBI:29105"/>
    </ligand>
</feature>
<feature type="mutagenesis site" description="In TIM15-2RH; Abolishes interaction with SSC1, and leads to self-aggregation of mtHSP70 and accumulation of uncleaved precursor proteins." evidence="9">
    <original>RH</original>
    <variation>AA</variation>
    <location>
        <begin position="106"/>
        <end position="107"/>
    </location>
</feature>
<feature type="mutagenesis site" description="Abolishes interaction with SSC1, and leads to self-aggregation of mtHSP70 and accumulation of uncleaved precursor proteins." evidence="9">
    <original>D</original>
    <variation>A</variation>
    <location>
        <position position="111"/>
    </location>
</feature>
<feature type="mutagenesis site" description="Temperature sensitive; only partly prevents self-aggregation of mtHSP70 and leads to accumulation of uncleaved precursor proteins at high temperatures." evidence="9">
    <location>
        <begin position="133"/>
        <end position="137"/>
    </location>
</feature>
<feature type="mutagenesis site" description="In TIM15-5DE; no effect." evidence="9">
    <original>DLEFEDIPD</original>
    <variation>ALAFAAIPA</variation>
    <location>
        <begin position="140"/>
        <end position="148"/>
    </location>
</feature>
<feature type="strand" evidence="11">
    <location>
        <begin position="68"/>
        <end position="75"/>
    </location>
</feature>
<feature type="turn" evidence="11">
    <location>
        <begin position="76"/>
        <end position="79"/>
    </location>
</feature>
<feature type="strand" evidence="11">
    <location>
        <begin position="80"/>
        <end position="87"/>
    </location>
</feature>
<feature type="helix" evidence="11">
    <location>
        <begin position="88"/>
        <end position="92"/>
    </location>
</feature>
<feature type="strand" evidence="11">
    <location>
        <begin position="94"/>
        <end position="99"/>
    </location>
</feature>
<feature type="strand" evidence="11">
    <location>
        <begin position="106"/>
        <end position="109"/>
    </location>
</feature>
<feature type="helix" evidence="11">
    <location>
        <begin position="116"/>
        <end position="118"/>
    </location>
</feature>
<feature type="helix" evidence="11">
    <location>
        <begin position="123"/>
        <end position="130"/>
    </location>
</feature>
<feature type="strand" evidence="11">
    <location>
        <begin position="135"/>
        <end position="138"/>
    </location>
</feature>
<feature type="strand" evidence="11">
    <location>
        <begin position="140"/>
        <end position="145"/>
    </location>
</feature>
<feature type="helix" evidence="11">
    <location>
        <begin position="148"/>
        <end position="154"/>
    </location>
</feature>
<feature type="strand" evidence="11">
    <location>
        <begin position="155"/>
        <end position="157"/>
    </location>
</feature>
<protein>
    <recommendedName>
        <fullName>Mitochondrial protein import protein ZIM17</fullName>
    </recommendedName>
    <alternativeName>
        <fullName>Mitochondrial import inner membrane translocase subunit TIM15</fullName>
    </alternativeName>
    <alternativeName>
        <fullName>mtHsp70 escort protein 1</fullName>
    </alternativeName>
    <alternativeName>
        <fullName>mtHsp70-associated motor and chaperone protein TIM15/ZIM17</fullName>
        <shortName>MMC</shortName>
    </alternativeName>
</protein>
<organism>
    <name type="scientific">Saccharomyces cerevisiae (strain ATCC 204508 / S288c)</name>
    <name type="common">Baker's yeast</name>
    <dbReference type="NCBI Taxonomy" id="559292"/>
    <lineage>
        <taxon>Eukaryota</taxon>
        <taxon>Fungi</taxon>
        <taxon>Dikarya</taxon>
        <taxon>Ascomycota</taxon>
        <taxon>Saccharomycotina</taxon>
        <taxon>Saccharomycetes</taxon>
        <taxon>Saccharomycetales</taxon>
        <taxon>Saccharomycetaceae</taxon>
        <taxon>Saccharomyces</taxon>
    </lineage>
</organism>
<accession>P42844</accession>
<accession>D6W0N5</accession>
<gene>
    <name type="primary">ZIM17</name>
    <name type="synonym">FMP28</name>
    <name type="synonym">HEP1</name>
    <name type="synonym">TIM15</name>
    <name type="ordered locus">YNL310C</name>
    <name type="ORF">N0381</name>
</gene>
<proteinExistence type="evidence at protein level"/>
<dbReference type="EMBL" id="Z46259">
    <property type="protein sequence ID" value="CAA86385.1"/>
    <property type="status" value="ALT_INIT"/>
    <property type="molecule type" value="Genomic_DNA"/>
</dbReference>
<dbReference type="EMBL" id="Z71586">
    <property type="protein sequence ID" value="CAA96239.1"/>
    <property type="status" value="ALT_INIT"/>
    <property type="molecule type" value="Genomic_DNA"/>
</dbReference>
<dbReference type="EMBL" id="AY558366">
    <property type="protein sequence ID" value="AAS56692.1"/>
    <property type="status" value="ALT_INIT"/>
    <property type="molecule type" value="Genomic_DNA"/>
</dbReference>
<dbReference type="EMBL" id="BK006947">
    <property type="protein sequence ID" value="DAA10251.1"/>
    <property type="molecule type" value="Genomic_DNA"/>
</dbReference>
<dbReference type="PIR" id="S51301">
    <property type="entry name" value="S51301"/>
</dbReference>
<dbReference type="RefSeq" id="NP_014089.2">
    <property type="nucleotide sequence ID" value="NM_001183148.1"/>
</dbReference>
<dbReference type="PDB" id="2E2Z">
    <property type="method" value="NMR"/>
    <property type="chains" value="A=64-159"/>
</dbReference>
<dbReference type="PDBsum" id="2E2Z"/>
<dbReference type="SMR" id="P42844"/>
<dbReference type="BioGRID" id="35529">
    <property type="interactions" value="29"/>
</dbReference>
<dbReference type="FunCoup" id="P42844">
    <property type="interactions" value="157"/>
</dbReference>
<dbReference type="IntAct" id="P42844">
    <property type="interactions" value="28"/>
</dbReference>
<dbReference type="MINT" id="P42844"/>
<dbReference type="STRING" id="4932.YNL310C"/>
<dbReference type="PaxDb" id="4932-YNL310C"/>
<dbReference type="PeptideAtlas" id="P42844"/>
<dbReference type="DNASU" id="855406"/>
<dbReference type="EnsemblFungi" id="YNL310C_mRNA">
    <property type="protein sequence ID" value="YNL310C"/>
    <property type="gene ID" value="YNL310C"/>
</dbReference>
<dbReference type="GeneID" id="855406"/>
<dbReference type="KEGG" id="sce:YNL310C"/>
<dbReference type="AGR" id="SGD:S000005254"/>
<dbReference type="SGD" id="S000005254">
    <property type="gene designation" value="ZIM17"/>
</dbReference>
<dbReference type="VEuPathDB" id="FungiDB:YNL310C"/>
<dbReference type="eggNOG" id="KOG3277">
    <property type="taxonomic scope" value="Eukaryota"/>
</dbReference>
<dbReference type="GeneTree" id="ENSGT00390000008220"/>
<dbReference type="HOGENOM" id="CLU_093902_1_0_1"/>
<dbReference type="InParanoid" id="P42844"/>
<dbReference type="OMA" id="MIPRTRT"/>
<dbReference type="OrthoDB" id="512667at2759"/>
<dbReference type="BioCyc" id="YEAST:G3O-33297-MONOMER"/>
<dbReference type="BioGRID-ORCS" id="855406">
    <property type="hits" value="6 hits in 10 CRISPR screens"/>
</dbReference>
<dbReference type="EvolutionaryTrace" id="P42844"/>
<dbReference type="PRO" id="PR:P42844"/>
<dbReference type="Proteomes" id="UP000002311">
    <property type="component" value="Chromosome XIV"/>
</dbReference>
<dbReference type="RNAct" id="P42844">
    <property type="molecule type" value="protein"/>
</dbReference>
<dbReference type="GO" id="GO:0005743">
    <property type="term" value="C:mitochondrial inner membrane"/>
    <property type="evidence" value="ECO:0007669"/>
    <property type="project" value="UniProtKB-SubCell"/>
</dbReference>
<dbReference type="GO" id="GO:0005759">
    <property type="term" value="C:mitochondrial matrix"/>
    <property type="evidence" value="ECO:0000314"/>
    <property type="project" value="SGD"/>
</dbReference>
<dbReference type="GO" id="GO:0005739">
    <property type="term" value="C:mitochondrion"/>
    <property type="evidence" value="ECO:0007005"/>
    <property type="project" value="SGD"/>
</dbReference>
<dbReference type="GO" id="GO:0051087">
    <property type="term" value="F:protein-folding chaperone binding"/>
    <property type="evidence" value="ECO:0000314"/>
    <property type="project" value="SGD"/>
</dbReference>
<dbReference type="GO" id="GO:0008270">
    <property type="term" value="F:zinc ion binding"/>
    <property type="evidence" value="ECO:0007669"/>
    <property type="project" value="UniProtKB-KW"/>
</dbReference>
<dbReference type="GO" id="GO:0007005">
    <property type="term" value="P:mitochondrion organization"/>
    <property type="evidence" value="ECO:0000315"/>
    <property type="project" value="SGD"/>
</dbReference>
<dbReference type="GO" id="GO:0006457">
    <property type="term" value="P:protein folding"/>
    <property type="evidence" value="ECO:0000315"/>
    <property type="project" value="SGD"/>
</dbReference>
<dbReference type="GO" id="GO:0030150">
    <property type="term" value="P:protein import into mitochondrial matrix"/>
    <property type="evidence" value="ECO:0000315"/>
    <property type="project" value="SGD"/>
</dbReference>
<dbReference type="GO" id="GO:0050821">
    <property type="term" value="P:protein stabilization"/>
    <property type="evidence" value="ECO:0000315"/>
    <property type="project" value="SGD"/>
</dbReference>
<dbReference type="GO" id="GO:0006986">
    <property type="term" value="P:response to unfolded protein"/>
    <property type="evidence" value="ECO:0000315"/>
    <property type="project" value="SGD"/>
</dbReference>
<dbReference type="InterPro" id="IPR024158">
    <property type="entry name" value="Mt_import_TIM15"/>
</dbReference>
<dbReference type="InterPro" id="IPR007853">
    <property type="entry name" value="Znf_DNL-typ"/>
</dbReference>
<dbReference type="PANTHER" id="PTHR20922">
    <property type="entry name" value="DNL-TYPE ZINC FINGER PROTEIN"/>
    <property type="match status" value="1"/>
</dbReference>
<dbReference type="PANTHER" id="PTHR20922:SF13">
    <property type="entry name" value="DNL-TYPE ZINC FINGER PROTEIN"/>
    <property type="match status" value="1"/>
</dbReference>
<dbReference type="Pfam" id="PF05180">
    <property type="entry name" value="zf-DNL"/>
    <property type="match status" value="1"/>
</dbReference>
<dbReference type="PROSITE" id="PS51501">
    <property type="entry name" value="ZF_DNL"/>
    <property type="match status" value="1"/>
</dbReference>
<reference key="1">
    <citation type="journal article" date="1995" name="Yeast">
        <title>Sequencing analysis of a 24.7 kb fragment of yeast chromosome XIV identifies six known genes, a new member of the hexose transporter family and ten new open reading frames.</title>
        <authorList>
            <person name="Maftahi M."/>
            <person name="Nicaud J.-M."/>
            <person name="Levesque H."/>
            <person name="Gaillardin C."/>
        </authorList>
    </citation>
    <scope>NUCLEOTIDE SEQUENCE [GENOMIC DNA]</scope>
    <source>
        <strain>S288c / FY1676</strain>
    </source>
</reference>
<reference key="2">
    <citation type="journal article" date="1997" name="Nature">
        <title>The nucleotide sequence of Saccharomyces cerevisiae chromosome XIV and its evolutionary implications.</title>
        <authorList>
            <person name="Philippsen P."/>
            <person name="Kleine K."/>
            <person name="Poehlmann R."/>
            <person name="Duesterhoeft A."/>
            <person name="Hamberg K."/>
            <person name="Hegemann J.H."/>
            <person name="Obermaier B."/>
            <person name="Urrestarazu L.A."/>
            <person name="Aert R."/>
            <person name="Albermann K."/>
            <person name="Altmann R."/>
            <person name="Andre B."/>
            <person name="Baladron V."/>
            <person name="Ballesta J.P.G."/>
            <person name="Becam A.-M."/>
            <person name="Beinhauer J.D."/>
            <person name="Boskovic J."/>
            <person name="Buitrago M.J."/>
            <person name="Bussereau F."/>
            <person name="Coster F."/>
            <person name="Crouzet M."/>
            <person name="D'Angelo M."/>
            <person name="Dal Pero F."/>
            <person name="De Antoni A."/>
            <person name="del Rey F."/>
            <person name="Doignon F."/>
            <person name="Domdey H."/>
            <person name="Dubois E."/>
            <person name="Fiedler T.A."/>
            <person name="Fleig U."/>
            <person name="Floeth M."/>
            <person name="Fritz C."/>
            <person name="Gaillardin C."/>
            <person name="Garcia-Cantalejo J.M."/>
            <person name="Glansdorff N."/>
            <person name="Goffeau A."/>
            <person name="Gueldener U."/>
            <person name="Herbert C.J."/>
            <person name="Heumann K."/>
            <person name="Heuss-Neitzel D."/>
            <person name="Hilbert H."/>
            <person name="Hinni K."/>
            <person name="Iraqui Houssaini I."/>
            <person name="Jacquet M."/>
            <person name="Jimenez A."/>
            <person name="Jonniaux J.-L."/>
            <person name="Karpfinger-Hartl L."/>
            <person name="Lanfranchi G."/>
            <person name="Lepingle A."/>
            <person name="Levesque H."/>
            <person name="Lyck R."/>
            <person name="Maftahi M."/>
            <person name="Mallet L."/>
            <person name="Maurer C.T.C."/>
            <person name="Messenguy F."/>
            <person name="Mewes H.-W."/>
            <person name="Moestl D."/>
            <person name="Nasr F."/>
            <person name="Nicaud J.-M."/>
            <person name="Niedenthal R.K."/>
            <person name="Pandolfo D."/>
            <person name="Pierard A."/>
            <person name="Piravandi E."/>
            <person name="Planta R.J."/>
            <person name="Pohl T.M."/>
            <person name="Purnelle B."/>
            <person name="Rebischung C."/>
            <person name="Remacha M.A."/>
            <person name="Revuelta J.L."/>
            <person name="Rinke M."/>
            <person name="Saiz J.E."/>
            <person name="Sartorello F."/>
            <person name="Scherens B."/>
            <person name="Sen-Gupta M."/>
            <person name="Soler-Mira A."/>
            <person name="Urbanus J.H.M."/>
            <person name="Valle G."/>
            <person name="Van Dyck L."/>
            <person name="Verhasselt P."/>
            <person name="Vierendeels F."/>
            <person name="Vissers S."/>
            <person name="Voet M."/>
            <person name="Volckaert G."/>
            <person name="Wach A."/>
            <person name="Wambutt R."/>
            <person name="Wedler H."/>
            <person name="Zollner A."/>
            <person name="Hani J."/>
        </authorList>
    </citation>
    <scope>NUCLEOTIDE SEQUENCE [LARGE SCALE GENOMIC DNA]</scope>
    <source>
        <strain>ATCC 204508 / S288c</strain>
    </source>
</reference>
<reference key="3">
    <citation type="journal article" date="2014" name="G3 (Bethesda)">
        <title>The reference genome sequence of Saccharomyces cerevisiae: Then and now.</title>
        <authorList>
            <person name="Engel S.R."/>
            <person name="Dietrich F.S."/>
            <person name="Fisk D.G."/>
            <person name="Binkley G."/>
            <person name="Balakrishnan R."/>
            <person name="Costanzo M.C."/>
            <person name="Dwight S.S."/>
            <person name="Hitz B.C."/>
            <person name="Karra K."/>
            <person name="Nash R.S."/>
            <person name="Weng S."/>
            <person name="Wong E.D."/>
            <person name="Lloyd P."/>
            <person name="Skrzypek M.S."/>
            <person name="Miyasato S.R."/>
            <person name="Simison M."/>
            <person name="Cherry J.M."/>
        </authorList>
    </citation>
    <scope>GENOME REANNOTATION</scope>
    <source>
        <strain>ATCC 204508 / S288c</strain>
    </source>
</reference>
<reference key="4">
    <citation type="journal article" date="2007" name="Genome Res.">
        <title>Approaching a complete repository of sequence-verified protein-encoding clones for Saccharomyces cerevisiae.</title>
        <authorList>
            <person name="Hu Y."/>
            <person name="Rolfs A."/>
            <person name="Bhullar B."/>
            <person name="Murthy T.V.S."/>
            <person name="Zhu C."/>
            <person name="Berger M.F."/>
            <person name="Camargo A.A."/>
            <person name="Kelley F."/>
            <person name="McCarron S."/>
            <person name="Jepson D."/>
            <person name="Richardson A."/>
            <person name="Raphael J."/>
            <person name="Moreira D."/>
            <person name="Taycher E."/>
            <person name="Zuo D."/>
            <person name="Mohr S."/>
            <person name="Kane M.F."/>
            <person name="Williamson J."/>
            <person name="Simpson A.J.G."/>
            <person name="Bulyk M.L."/>
            <person name="Harlow E."/>
            <person name="Marsischky G."/>
            <person name="Kolodner R.D."/>
            <person name="LaBaer J."/>
        </authorList>
    </citation>
    <scope>NUCLEOTIDE SEQUENCE [GENOMIC DNA]</scope>
    <source>
        <strain>ATCC 204508 / S288c</strain>
    </source>
</reference>
<reference key="5">
    <citation type="journal article" date="2005" name="EMBO J.">
        <title>Maintenance of structure and function of mitochondrial Hsp70 chaperones requires the chaperone Hep1.</title>
        <authorList>
            <person name="Sichting M."/>
            <person name="Mokranjac D."/>
            <person name="Azem A."/>
            <person name="Neupert W."/>
            <person name="Hell K."/>
        </authorList>
    </citation>
    <scope>PROTEIN SEQUENCE OF 48-52</scope>
    <scope>FUNCTION</scope>
    <scope>SUBCELLULAR LOCATION</scope>
    <scope>INTERACTION WITH SSC1</scope>
</reference>
<reference key="6">
    <citation type="journal article" date="2003" name="Nature">
        <title>Sequencing and comparison of yeast species to identify genes and regulatory elements.</title>
        <authorList>
            <person name="Kellis M."/>
            <person name="Patterson N."/>
            <person name="Endrizzi M."/>
            <person name="Birren B.W."/>
            <person name="Lander E.S."/>
        </authorList>
    </citation>
    <scope>IDENTIFICATION OF PROBABLE INITIATION SITE</scope>
</reference>
<reference key="7">
    <citation type="journal article" date="2003" name="Nature">
        <title>Global analysis of protein localization in budding yeast.</title>
        <authorList>
            <person name="Huh W.-K."/>
            <person name="Falvo J.V."/>
            <person name="Gerke L.C."/>
            <person name="Carroll A.S."/>
            <person name="Howson R.W."/>
            <person name="Weissman J.S."/>
            <person name="O'Shea E.K."/>
        </authorList>
    </citation>
    <scope>SUBCELLULAR LOCATION [LARGE SCALE ANALYSIS]</scope>
</reference>
<reference key="8">
    <citation type="journal article" date="2003" name="Nature">
        <title>Global analysis of protein expression in yeast.</title>
        <authorList>
            <person name="Ghaemmaghami S."/>
            <person name="Huh W.-K."/>
            <person name="Bower K."/>
            <person name="Howson R.W."/>
            <person name="Belle A."/>
            <person name="Dephoure N."/>
            <person name="O'Shea E.K."/>
            <person name="Weissman J.S."/>
        </authorList>
    </citation>
    <scope>LEVEL OF PROTEIN EXPRESSION [LARGE SCALE ANALYSIS]</scope>
</reference>
<reference key="9">
    <citation type="journal article" date="2003" name="Proc. Natl. Acad. Sci. U.S.A.">
        <title>The proteome of Saccharomyces cerevisiae mitochondria.</title>
        <authorList>
            <person name="Sickmann A."/>
            <person name="Reinders J."/>
            <person name="Wagner Y."/>
            <person name="Joppich C."/>
            <person name="Zahedi R.P."/>
            <person name="Meyer H.E."/>
            <person name="Schoenfisch B."/>
            <person name="Perschil I."/>
            <person name="Chacinska A."/>
            <person name="Guiard B."/>
            <person name="Rehling P."/>
            <person name="Pfanner N."/>
            <person name="Meisinger C."/>
        </authorList>
    </citation>
    <scope>SUBCELLULAR LOCATION [LARGE SCALE ANALYSIS]</scope>
    <source>
        <strain>ATCC 76625 / YPH499</strain>
    </source>
</reference>
<reference key="10">
    <citation type="journal article" date="2004" name="J. Biol. Chem.">
        <title>Zim17, a novel zinc finger protein essential for protein import into mitochondria.</title>
        <authorList>
            <person name="Burri L."/>
            <person name="Vascotto K."/>
            <person name="Fredersdorf S."/>
            <person name="Tiedt R."/>
            <person name="Hall M.N."/>
            <person name="Lithgow T."/>
        </authorList>
    </citation>
    <scope>FUNCTION</scope>
    <scope>SUBCELLULAR LOCATION</scope>
    <scope>IDENTIFICATION OF START CODON</scope>
</reference>
<reference key="11">
    <citation type="journal article" date="2005" name="FEBS Lett.">
        <title>Identification of a novel member of yeast mitochondrial Hsp70-associated motor and chaperone proteins that facilitates protein translocation across the inner membrane.</title>
        <authorList>
            <person name="Yamamoto H."/>
            <person name="Momose T."/>
            <person name="Yatsukawa Y."/>
            <person name="Ohshima C."/>
            <person name="Ishikawa D."/>
            <person name="Sato T."/>
            <person name="Tamura Y."/>
            <person name="Ohwa Y."/>
            <person name="Endo T."/>
        </authorList>
    </citation>
    <scope>FUNCTION</scope>
    <scope>SUBCELLULAR LOCATION</scope>
    <scope>INTERACTION WITH SSC1</scope>
</reference>
<reference key="12">
    <citation type="journal article" date="2005" name="J. Mol. Biol.">
        <title>Inactivation of the mitochondrial heat shock protein Zim17 leads to aggregation of matrix Hsp70s followed by pleiotropic effects on morphology and protein biogenesis.</title>
        <authorList>
            <person name="Sanjuan Szklarz L.K."/>
            <person name="Guiard B."/>
            <person name="Rissler M."/>
            <person name="Wiedemann N."/>
            <person name="Kozjak V."/>
            <person name="van der Laan M."/>
            <person name="Lohaus C."/>
            <person name="Marcus K."/>
            <person name="Meyer H.E."/>
            <person name="Chacinska A."/>
            <person name="Pfanner N."/>
            <person name="Meisinger C."/>
        </authorList>
    </citation>
    <scope>FUNCTION</scope>
    <scope>INDUCTION</scope>
    <scope>SUBCELLULAR LOCATION</scope>
</reference>
<reference key="13">
    <citation type="journal article" date="2007" name="EMBO Rep.">
        <title>Structural basis of functional cooperation of Tim15/Zim17 with yeast mitochondrial Hsp70.</title>
        <authorList>
            <person name="Momose T."/>
            <person name="Ohshima C."/>
            <person name="Maeda M."/>
            <person name="Endo T."/>
        </authorList>
    </citation>
    <scope>STRUCTURE BY NMR OF 64-159</scope>
    <scope>INTERACTION WITH SSC1</scope>
    <scope>MUTAGENESIS OF 106-ARG-HIS-107; ASP-111; 133-GLN--ASP-137 AND 140-ASP--ASP-148</scope>
</reference>
<name>ZIM17_YEAST</name>